<proteinExistence type="inferred from homology"/>
<name>Y484_ACIBC</name>
<sequence>MIHHIPNVLSKEQVQYFRNEMDKIEWVNGKVTAGTLSATVKRNQQLPEDHPLTHHLSNIILEALGTHPLFLSAAIPLDIIPPLFNRYENQESFGFHVDNSIRRIRGTNERLRTDLSCTLFLSEPEEYEGGDLVVEDTYGYHEVKLPAGDMILYPSTSLHEVTAITSGCRIASFFWVQSMVRDDAERHMLFNLDQTVQNLRMQLGDNHSEVIKLTNLYHNLMRKWAEL</sequence>
<reference key="1">
    <citation type="journal article" date="2008" name="Antimicrob. Agents Chemother.">
        <title>Whole-genome pyrosequencing of an epidemic multidrug-resistant Acinetobacter baumannii strain belonging to the European clone II group.</title>
        <authorList>
            <person name="Iacono M."/>
            <person name="Villa L."/>
            <person name="Fortini D."/>
            <person name="Bordoni R."/>
            <person name="Imperi F."/>
            <person name="Bonnal R.J."/>
            <person name="Sicheritz-Ponten T."/>
            <person name="De Bellis G."/>
            <person name="Visca P."/>
            <person name="Cassone A."/>
            <person name="Carattoli A."/>
        </authorList>
    </citation>
    <scope>NUCLEOTIDE SEQUENCE [LARGE SCALE GENOMIC DNA]</scope>
    <source>
        <strain>ACICU</strain>
    </source>
</reference>
<dbReference type="EC" id="1.14.11.-" evidence="1"/>
<dbReference type="EMBL" id="CP000863">
    <property type="protein sequence ID" value="ACC55796.1"/>
    <property type="molecule type" value="Genomic_DNA"/>
</dbReference>
<dbReference type="RefSeq" id="WP_001984475.1">
    <property type="nucleotide sequence ID" value="NZ_CP031380.1"/>
</dbReference>
<dbReference type="SMR" id="B2I3B8"/>
<dbReference type="KEGG" id="abc:ACICU_00484"/>
<dbReference type="HOGENOM" id="CLU_106663_0_0_6"/>
<dbReference type="Proteomes" id="UP000008839">
    <property type="component" value="Chromosome"/>
</dbReference>
<dbReference type="GO" id="GO:0016706">
    <property type="term" value="F:2-oxoglutarate-dependent dioxygenase activity"/>
    <property type="evidence" value="ECO:0007669"/>
    <property type="project" value="UniProtKB-UniRule"/>
</dbReference>
<dbReference type="GO" id="GO:0005506">
    <property type="term" value="F:iron ion binding"/>
    <property type="evidence" value="ECO:0007669"/>
    <property type="project" value="UniProtKB-UniRule"/>
</dbReference>
<dbReference type="GO" id="GO:0031418">
    <property type="term" value="F:L-ascorbic acid binding"/>
    <property type="evidence" value="ECO:0007669"/>
    <property type="project" value="UniProtKB-KW"/>
</dbReference>
<dbReference type="GO" id="GO:0006974">
    <property type="term" value="P:DNA damage response"/>
    <property type="evidence" value="ECO:0007669"/>
    <property type="project" value="TreeGrafter"/>
</dbReference>
<dbReference type="GO" id="GO:0006879">
    <property type="term" value="P:intracellular iron ion homeostasis"/>
    <property type="evidence" value="ECO:0007669"/>
    <property type="project" value="TreeGrafter"/>
</dbReference>
<dbReference type="Gene3D" id="2.60.120.620">
    <property type="entry name" value="q2cbj1_9rhob like domain"/>
    <property type="match status" value="1"/>
</dbReference>
<dbReference type="Gene3D" id="4.10.860.20">
    <property type="entry name" value="Rabenosyn, Rab binding domain"/>
    <property type="match status" value="1"/>
</dbReference>
<dbReference type="HAMAP" id="MF_00657">
    <property type="entry name" value="Hydroxyl_YbiX"/>
    <property type="match status" value="1"/>
</dbReference>
<dbReference type="InterPro" id="IPR005123">
    <property type="entry name" value="Oxoglu/Fe-dep_dioxygenase_dom"/>
</dbReference>
<dbReference type="InterPro" id="IPR041097">
    <property type="entry name" value="PKHD_C"/>
</dbReference>
<dbReference type="InterPro" id="IPR023550">
    <property type="entry name" value="PKHD_hydroxylase"/>
</dbReference>
<dbReference type="InterPro" id="IPR006620">
    <property type="entry name" value="Pro_4_hyd_alph"/>
</dbReference>
<dbReference type="InterPro" id="IPR044862">
    <property type="entry name" value="Pro_4_hyd_alph_FE2OG_OXY"/>
</dbReference>
<dbReference type="NCBIfam" id="NF003973">
    <property type="entry name" value="PRK05467.1-2"/>
    <property type="match status" value="1"/>
</dbReference>
<dbReference type="NCBIfam" id="NF003974">
    <property type="entry name" value="PRK05467.1-3"/>
    <property type="match status" value="1"/>
</dbReference>
<dbReference type="NCBIfam" id="NF003975">
    <property type="entry name" value="PRK05467.1-4"/>
    <property type="match status" value="1"/>
</dbReference>
<dbReference type="PANTHER" id="PTHR41536">
    <property type="entry name" value="PKHD-TYPE HYDROXYLASE YBIX"/>
    <property type="match status" value="1"/>
</dbReference>
<dbReference type="PANTHER" id="PTHR41536:SF1">
    <property type="entry name" value="PKHD-TYPE HYDROXYLASE YBIX"/>
    <property type="match status" value="1"/>
</dbReference>
<dbReference type="Pfam" id="PF13640">
    <property type="entry name" value="2OG-FeII_Oxy_3"/>
    <property type="match status" value="1"/>
</dbReference>
<dbReference type="Pfam" id="PF18331">
    <property type="entry name" value="PKHD_C"/>
    <property type="match status" value="1"/>
</dbReference>
<dbReference type="SMART" id="SM00702">
    <property type="entry name" value="P4Hc"/>
    <property type="match status" value="1"/>
</dbReference>
<dbReference type="SUPFAM" id="SSF51197">
    <property type="entry name" value="Clavaminate synthase-like"/>
    <property type="match status" value="1"/>
</dbReference>
<dbReference type="PROSITE" id="PS51471">
    <property type="entry name" value="FE2OG_OXY"/>
    <property type="match status" value="1"/>
</dbReference>
<gene>
    <name type="ordered locus">ACICU_00484</name>
</gene>
<comment type="cofactor">
    <cofactor evidence="1">
        <name>Fe(2+)</name>
        <dbReference type="ChEBI" id="CHEBI:29033"/>
    </cofactor>
    <text evidence="1">Binds 1 Fe(2+) ion per subunit.</text>
</comment>
<comment type="cofactor">
    <cofactor evidence="1">
        <name>L-ascorbate</name>
        <dbReference type="ChEBI" id="CHEBI:38290"/>
    </cofactor>
</comment>
<accession>B2I3B8</accession>
<evidence type="ECO:0000255" key="1">
    <source>
        <dbReference type="HAMAP-Rule" id="MF_00657"/>
    </source>
</evidence>
<feature type="chain" id="PRO_0000346458" description="PKHD-type hydroxylase ACICU_00484">
    <location>
        <begin position="1"/>
        <end position="227"/>
    </location>
</feature>
<feature type="domain" description="Fe2OG dioxygenase" evidence="1">
    <location>
        <begin position="78"/>
        <end position="178"/>
    </location>
</feature>
<feature type="binding site" evidence="1">
    <location>
        <position position="96"/>
    </location>
    <ligand>
        <name>Fe cation</name>
        <dbReference type="ChEBI" id="CHEBI:24875"/>
    </ligand>
</feature>
<feature type="binding site" evidence="1">
    <location>
        <position position="98"/>
    </location>
    <ligand>
        <name>Fe cation</name>
        <dbReference type="ChEBI" id="CHEBI:24875"/>
    </ligand>
</feature>
<feature type="binding site" evidence="1">
    <location>
        <position position="159"/>
    </location>
    <ligand>
        <name>Fe cation</name>
        <dbReference type="ChEBI" id="CHEBI:24875"/>
    </ligand>
</feature>
<feature type="binding site" evidence="1">
    <location>
        <position position="169"/>
    </location>
    <ligand>
        <name>2-oxoglutarate</name>
        <dbReference type="ChEBI" id="CHEBI:16810"/>
    </ligand>
</feature>
<organism>
    <name type="scientific">Acinetobacter baumannii (strain ACICU)</name>
    <dbReference type="NCBI Taxonomy" id="405416"/>
    <lineage>
        <taxon>Bacteria</taxon>
        <taxon>Pseudomonadati</taxon>
        <taxon>Pseudomonadota</taxon>
        <taxon>Gammaproteobacteria</taxon>
        <taxon>Moraxellales</taxon>
        <taxon>Moraxellaceae</taxon>
        <taxon>Acinetobacter</taxon>
        <taxon>Acinetobacter calcoaceticus/baumannii complex</taxon>
    </lineage>
</organism>
<keyword id="KW-0223">Dioxygenase</keyword>
<keyword id="KW-0408">Iron</keyword>
<keyword id="KW-0479">Metal-binding</keyword>
<keyword id="KW-0560">Oxidoreductase</keyword>
<keyword id="KW-0847">Vitamin C</keyword>
<protein>
    <recommendedName>
        <fullName evidence="1">PKHD-type hydroxylase ACICU_00484</fullName>
        <ecNumber evidence="1">1.14.11.-</ecNumber>
    </recommendedName>
</protein>